<keyword id="KW-1015">Disulfide bond</keyword>
<keyword id="KW-0281">Fimbrium</keyword>
<keyword id="KW-1185">Reference proteome</keyword>
<keyword id="KW-0732">Signal</keyword>
<name>SFMA_ECOLI</name>
<evidence type="ECO:0000250" key="1"/>
<evidence type="ECO:0000255" key="2"/>
<evidence type="ECO:0000269" key="3">
    <source>
    </source>
</evidence>
<evidence type="ECO:0000305" key="4"/>
<evidence type="ECO:0000305" key="5">
    <source>
    </source>
</evidence>
<gene>
    <name type="primary">sfmA</name>
    <name type="ordered locus">b0530</name>
    <name type="ordered locus">JW0519</name>
</gene>
<feature type="signal peptide" evidence="2">
    <location>
        <begin position="1"/>
        <end position="22"/>
    </location>
</feature>
<feature type="chain" id="PRO_0000009174" description="Uncharacterized fimbrial-like protein SfmA">
    <location>
        <begin position="23"/>
        <end position="180"/>
    </location>
</feature>
<feature type="disulfide bond" evidence="4">
    <location>
        <begin position="41"/>
        <end position="81"/>
    </location>
</feature>
<proteinExistence type="evidence at transcript level"/>
<sequence>MKLRFISSALAAALFAATGSYAAVVDGGTIHFEGELVNAACSVNTDSADQVVTLGQYRTDIFNAVGNTSALIPFTIQLNDCDPVVAANAAVAFSGQADAINDNLLAIASSTNTTTATGVGIEILDNTSAILKPDGNSFSTNQNLIPGTNVLHFSARYKGTGTSASAGQANADATFIMRYE</sequence>
<reference key="1">
    <citation type="submission" date="1997-01" db="EMBL/GenBank/DDBJ databases">
        <title>Sequence of minutes 4-25 of Escherichia coli.</title>
        <authorList>
            <person name="Chung E."/>
            <person name="Allen E."/>
            <person name="Araujo R."/>
            <person name="Aparicio A.M."/>
            <person name="Davis K."/>
            <person name="Duncan M."/>
            <person name="Federspiel N."/>
            <person name="Hyman R."/>
            <person name="Kalman S."/>
            <person name="Komp C."/>
            <person name="Kurdi O."/>
            <person name="Lew H."/>
            <person name="Lin D."/>
            <person name="Namath A."/>
            <person name="Oefner P."/>
            <person name="Roberts D."/>
            <person name="Schramm S."/>
            <person name="Davis R.W."/>
        </authorList>
    </citation>
    <scope>NUCLEOTIDE SEQUENCE [LARGE SCALE GENOMIC DNA]</scope>
    <source>
        <strain>K12 / MG1655 / ATCC 47076</strain>
    </source>
</reference>
<reference key="2">
    <citation type="journal article" date="1997" name="Science">
        <title>The complete genome sequence of Escherichia coli K-12.</title>
        <authorList>
            <person name="Blattner F.R."/>
            <person name="Plunkett G. III"/>
            <person name="Bloch C.A."/>
            <person name="Perna N.T."/>
            <person name="Burland V."/>
            <person name="Riley M."/>
            <person name="Collado-Vides J."/>
            <person name="Glasner J.D."/>
            <person name="Rode C.K."/>
            <person name="Mayhew G.F."/>
            <person name="Gregor J."/>
            <person name="Davis N.W."/>
            <person name="Kirkpatrick H.A."/>
            <person name="Goeden M.A."/>
            <person name="Rose D.J."/>
            <person name="Mau B."/>
            <person name="Shao Y."/>
        </authorList>
    </citation>
    <scope>NUCLEOTIDE SEQUENCE [LARGE SCALE GENOMIC DNA]</scope>
    <source>
        <strain>K12 / MG1655 / ATCC 47076</strain>
    </source>
</reference>
<reference key="3">
    <citation type="journal article" date="2006" name="Mol. Syst. Biol.">
        <title>Highly accurate genome sequences of Escherichia coli K-12 strains MG1655 and W3110.</title>
        <authorList>
            <person name="Hayashi K."/>
            <person name="Morooka N."/>
            <person name="Yamamoto Y."/>
            <person name="Fujita K."/>
            <person name="Isono K."/>
            <person name="Choi S."/>
            <person name="Ohtsubo E."/>
            <person name="Baba T."/>
            <person name="Wanner B.L."/>
            <person name="Mori H."/>
            <person name="Horiuchi T."/>
        </authorList>
    </citation>
    <scope>NUCLEOTIDE SEQUENCE [LARGE SCALE GENOMIC DNA]</scope>
    <source>
        <strain>K12 / W3110 / ATCC 27325 / DSM 5911</strain>
    </source>
</reference>
<reference key="4">
    <citation type="journal article" date="2010" name="Environ. Microbiol.">
        <title>Escherichia coli K-12 possesses multiple cryptic but functional chaperone-usher fimbriae with distinct surface specificities.</title>
        <authorList>
            <person name="Korea C.G."/>
            <person name="Badouraly R."/>
            <person name="Prevost M.C."/>
            <person name="Ghigo J.M."/>
            <person name="Beloin C."/>
        </authorList>
    </citation>
    <scope>FUNCTION</scope>
    <scope>INDUCTION</scope>
    <scope>DISRUPTION PHENOTYPE</scope>
    <source>
        <strain>K12 / MG1655 / ATCC 47076</strain>
    </source>
</reference>
<organism>
    <name type="scientific">Escherichia coli (strain K12)</name>
    <dbReference type="NCBI Taxonomy" id="83333"/>
    <lineage>
        <taxon>Bacteria</taxon>
        <taxon>Pseudomonadati</taxon>
        <taxon>Pseudomonadota</taxon>
        <taxon>Gammaproteobacteria</taxon>
        <taxon>Enterobacterales</taxon>
        <taxon>Enterobacteriaceae</taxon>
        <taxon>Escherichia</taxon>
    </lineage>
</organism>
<comment type="function">
    <text evidence="3">Part of the sfmACDHF fimbrial operon. Could contribute to adhesion to various surfaces in specific environmental niches. Increases adhesion to eukaryotic T24 bladder epithelial cells in the absence of fim genes.</text>
</comment>
<comment type="subcellular location">
    <subcellularLocation>
        <location evidence="1">Fimbrium</location>
    </subcellularLocation>
</comment>
<comment type="induction">
    <text evidence="3">Expression is negatively regulated by H-NS and subjected to cAMP receptor protein (CRP)-mediated catabolite repression.</text>
</comment>
<comment type="disruption phenotype">
    <text evidence="3">Deletion of the operon under classical laboratory conditions does not result in any major effect on E.coli capacity to form biofilms compared with the wild-type strain.</text>
</comment>
<comment type="miscellaneous">
    <text evidence="5">The operon is cryptic under classical laboratory conditions, but is functional when constitutively expressed.</text>
</comment>
<comment type="similarity">
    <text evidence="4">Belongs to the fimbrial protein family.</text>
</comment>
<comment type="sequence caution" evidence="4">
    <conflict type="erroneous initiation">
        <sequence resource="EMBL-CDS" id="AAB40283"/>
    </conflict>
    <text>Extended N-terminus.</text>
</comment>
<accession>P0ABW5</accession>
<accession>P77660</accession>
<accession>Q2MBP9</accession>
<dbReference type="EMBL" id="U82664">
    <property type="protein sequence ID" value="AAB40283.1"/>
    <property type="status" value="ALT_INIT"/>
    <property type="molecule type" value="Genomic_DNA"/>
</dbReference>
<dbReference type="EMBL" id="U00096">
    <property type="protein sequence ID" value="AAC73632.2"/>
    <property type="molecule type" value="Genomic_DNA"/>
</dbReference>
<dbReference type="EMBL" id="AP009048">
    <property type="protein sequence ID" value="BAE76307.1"/>
    <property type="molecule type" value="Genomic_DNA"/>
</dbReference>
<dbReference type="PIR" id="A64785">
    <property type="entry name" value="A64785"/>
</dbReference>
<dbReference type="RefSeq" id="NP_415063.4">
    <property type="nucleotide sequence ID" value="NC_000913.3"/>
</dbReference>
<dbReference type="SMR" id="P0ABW5"/>
<dbReference type="BioGRID" id="4259878">
    <property type="interactions" value="15"/>
</dbReference>
<dbReference type="BioGRID" id="849896">
    <property type="interactions" value="13"/>
</dbReference>
<dbReference type="FunCoup" id="P0ABW5">
    <property type="interactions" value="20"/>
</dbReference>
<dbReference type="IntAct" id="P0ABW5">
    <property type="interactions" value="13"/>
</dbReference>
<dbReference type="STRING" id="511145.b0530"/>
<dbReference type="PaxDb" id="511145-b0530"/>
<dbReference type="EnsemblBacteria" id="AAC73632">
    <property type="protein sequence ID" value="AAC73632"/>
    <property type="gene ID" value="b0530"/>
</dbReference>
<dbReference type="GeneID" id="945522"/>
<dbReference type="KEGG" id="ecj:JW0519"/>
<dbReference type="KEGG" id="eco:b0530"/>
<dbReference type="KEGG" id="ecoc:C3026_02600"/>
<dbReference type="PATRIC" id="fig|1411691.4.peg.1748"/>
<dbReference type="EchoBASE" id="EB3640"/>
<dbReference type="eggNOG" id="COG3539">
    <property type="taxonomic scope" value="Bacteria"/>
</dbReference>
<dbReference type="HOGENOM" id="CLU_088965_0_0_6"/>
<dbReference type="InParanoid" id="P0ABW5"/>
<dbReference type="OMA" id="ATFVMKY"/>
<dbReference type="OrthoDB" id="6522787at2"/>
<dbReference type="PhylomeDB" id="P0ABW5"/>
<dbReference type="BioCyc" id="EcoCyc:G6290-MONOMER"/>
<dbReference type="PRO" id="PR:P0ABW5"/>
<dbReference type="Proteomes" id="UP000000625">
    <property type="component" value="Chromosome"/>
</dbReference>
<dbReference type="GO" id="GO:0009289">
    <property type="term" value="C:pilus"/>
    <property type="evidence" value="ECO:0000318"/>
    <property type="project" value="GO_Central"/>
</dbReference>
<dbReference type="GO" id="GO:0007155">
    <property type="term" value="P:cell adhesion"/>
    <property type="evidence" value="ECO:0000315"/>
    <property type="project" value="EcoCyc"/>
</dbReference>
<dbReference type="GO" id="GO:0043709">
    <property type="term" value="P:cell adhesion involved in single-species biofilm formation"/>
    <property type="evidence" value="ECO:0000318"/>
    <property type="project" value="GO_Central"/>
</dbReference>
<dbReference type="FunFam" id="2.60.40.1090:FF:000001">
    <property type="entry name" value="Type-1 fimbrial major subunit"/>
    <property type="match status" value="1"/>
</dbReference>
<dbReference type="Gene3D" id="2.60.40.1090">
    <property type="entry name" value="Fimbrial-type adhesion domain"/>
    <property type="match status" value="1"/>
</dbReference>
<dbReference type="InterPro" id="IPR000259">
    <property type="entry name" value="Adhesion_dom_fimbrial"/>
</dbReference>
<dbReference type="InterPro" id="IPR036937">
    <property type="entry name" value="Adhesion_dom_fimbrial_sf"/>
</dbReference>
<dbReference type="InterPro" id="IPR008966">
    <property type="entry name" value="Adhesion_dom_sf"/>
</dbReference>
<dbReference type="InterPro" id="IPR050263">
    <property type="entry name" value="Bact_Fimbrial_Adh_Pro"/>
</dbReference>
<dbReference type="NCBIfam" id="NF011741">
    <property type="entry name" value="PRK15194.1"/>
    <property type="match status" value="1"/>
</dbReference>
<dbReference type="PANTHER" id="PTHR33420">
    <property type="entry name" value="FIMBRIAL SUBUNIT ELFA-RELATED"/>
    <property type="match status" value="1"/>
</dbReference>
<dbReference type="PANTHER" id="PTHR33420:SF12">
    <property type="entry name" value="FIMBRIN-LIKE PROTEIN FIMI-RELATED"/>
    <property type="match status" value="1"/>
</dbReference>
<dbReference type="Pfam" id="PF00419">
    <property type="entry name" value="Fimbrial"/>
    <property type="match status" value="1"/>
</dbReference>
<dbReference type="SUPFAM" id="SSF49401">
    <property type="entry name" value="Bacterial adhesins"/>
    <property type="match status" value="1"/>
</dbReference>
<protein>
    <recommendedName>
        <fullName>Uncharacterized fimbrial-like protein SfmA</fullName>
    </recommendedName>
    <alternativeName>
        <fullName>Type-1A pilin</fullName>
    </alternativeName>
</protein>